<accession>O36367</accession>
<organismHost>
    <name type="scientific">Connochaetes taurinus</name>
    <name type="common">Blue wildebeest</name>
    <dbReference type="NCBI Taxonomy" id="9927"/>
</organismHost>
<evidence type="ECO:0000250" key="1"/>
<evidence type="ECO:0000250" key="2">
    <source>
        <dbReference type="UniProtKB" id="P16753"/>
    </source>
</evidence>
<evidence type="ECO:0000255" key="3">
    <source>
        <dbReference type="HAMAP-Rule" id="MF_04008"/>
    </source>
</evidence>
<evidence type="ECO:0000256" key="4">
    <source>
        <dbReference type="SAM" id="MobiDB-lite"/>
    </source>
</evidence>
<feature type="chain" id="PRO_0000405708" description="Capsid scaffolding protein">
    <location>
        <begin position="1"/>
        <end position="524"/>
    </location>
</feature>
<feature type="chain" id="PRO_0000405709" description="Assemblin" evidence="3">
    <location>
        <begin position="1"/>
        <end position="230"/>
    </location>
</feature>
<feature type="chain" id="PRO_0000405710" description="Assembly protein" evidence="3">
    <location>
        <begin position="231"/>
        <end position="524"/>
    </location>
</feature>
<feature type="region of interest" description="Interaction with pAP" evidence="3">
    <location>
        <begin position="268"/>
        <end position="287"/>
    </location>
</feature>
<feature type="region of interest" description="Disordered" evidence="4">
    <location>
        <begin position="359"/>
        <end position="378"/>
    </location>
</feature>
<feature type="region of interest" description="Interaction with major capsid protein" evidence="3">
    <location>
        <begin position="504"/>
        <end position="524"/>
    </location>
</feature>
<feature type="short sequence motif" description="Nuclear localization signal" evidence="1">
    <location>
        <begin position="359"/>
        <end position="365"/>
    </location>
</feature>
<feature type="active site" description="Charge relay system" evidence="3">
    <location>
        <position position="47"/>
    </location>
</feature>
<feature type="active site" description="Charge relay system" evidence="3">
    <location>
        <position position="116"/>
    </location>
</feature>
<feature type="active site" description="Charge relay system" evidence="3">
    <location>
        <position position="137"/>
    </location>
</feature>
<feature type="site" description="Cleavage; by assemblin; Release site" evidence="3">
    <location>
        <begin position="230"/>
        <end position="231"/>
    </location>
</feature>
<feature type="site" description="Cleavage; by assemblin; Maturation site" evidence="2">
    <location>
        <begin position="498"/>
        <end position="499"/>
    </location>
</feature>
<protein>
    <recommendedName>
        <fullName evidence="3">Capsid scaffolding protein</fullName>
    </recommendedName>
    <alternativeName>
        <fullName>Capsid protein 17</fullName>
    </alternativeName>
    <alternativeName>
        <fullName evidence="3">Protease precursor</fullName>
        <shortName evidence="3">pPR</shortName>
    </alternativeName>
    <component>
        <recommendedName>
            <fullName evidence="3">Assemblin</fullName>
            <ecNumber evidence="3">3.4.21.97</ecNumber>
        </recommendedName>
        <alternativeName>
            <fullName evidence="3">Protease</fullName>
            <shortName evidence="3">Pr</shortName>
        </alternativeName>
    </component>
    <component>
        <recommendedName>
            <fullName evidence="3">Assembly protein</fullName>
            <shortName evidence="3">AP</shortName>
        </recommendedName>
        <alternativeName>
            <fullName evidence="3">Capsid assembly protein</fullName>
        </alternativeName>
    </component>
</protein>
<name>SCAF_ALHV1</name>
<sequence length="524" mass="57930">MSRDSLFVAGFVDISTCPKEDPSLNLDAQTWSRYLPLSTSIPLTVEHFSEAQVGWVTGLFSVAQGLFCTAVITAGEFLELLDSLYLECTVAQHSPKADLPRNPRAEVLHSWLPELSLSSVHPDLLGTKDEPGQVFHHISLCALGRRRGTVAVYGDSLAWVLSRFQSLSRDDVAMIATNALTPPSQAPEFTVKLGLLFAKAIDAGFISNRISTLKLDRQAAGISPATYLKASAVPQKLETAAPLNQPEGADTLIDSTMSGPGAPPAPQDDLIPVPRSAFLNMLESTVSRTHPANGDAPALLPFGRYNMVQVPKGLTPYVRPVGFIEPSDQDDYRYPSYTGPRPYDYFAPRQLCRNCCTSRPRKRAREDPEDEVSFPGEESTVFRKDLTDLSKSLAELQSEIRELKQMQNTPRPYPRPEHHYPAFDPLMYGLRPLPNPDKFPKEFICSDYFTKDESASKKPEVVHIPNPEQHVPACAAQPEVKLVEEKDVAPKQPRVVNASFQPKAETSKAATLQKLFCDEMLSKQ</sequence>
<reference key="1">
    <citation type="journal article" date="1997" name="J. Virol.">
        <title>Primary structure of the alcelaphine herpesvirus 1 genome.</title>
        <authorList>
            <person name="Ensser A."/>
            <person name="Pflanz R."/>
            <person name="Fleckenstein B."/>
        </authorList>
    </citation>
    <scope>NUCLEOTIDE SEQUENCE [LARGE SCALE GENOMIC DNA]</scope>
</reference>
<organism>
    <name type="scientific">Alcelaphine herpesvirus 1 (strain C500)</name>
    <name type="common">AlHV-1</name>
    <name type="synonym">Malignant catarrhal fever virus</name>
    <dbReference type="NCBI Taxonomy" id="654901"/>
    <lineage>
        <taxon>Viruses</taxon>
        <taxon>Duplodnaviria</taxon>
        <taxon>Heunggongvirae</taxon>
        <taxon>Peploviricota</taxon>
        <taxon>Herviviricetes</taxon>
        <taxon>Herpesvirales</taxon>
        <taxon>Orthoherpesviridae</taxon>
        <taxon>Gammaherpesvirinae</taxon>
        <taxon>Macavirus</taxon>
        <taxon>Macavirus alcelaphinegamma1</taxon>
    </lineage>
</organism>
<proteinExistence type="inferred from homology"/>
<gene>
    <name type="primary">17</name>
</gene>
<comment type="function">
    <molecule>Capsid scaffolding protein</molecule>
    <text evidence="3">Acts as a scaffold protein by binding major capsid protein in the cytoplasm, inducing the nuclear localization of both proteins. Multimerizes in the nucleus such as major capsid protein forms the icosahedral T=16 capsid. Autocatalytic cleavage releases the assembly protein, and subsequently abolishes interaction with major capsid protein. Cleavages products are evicted from the capsid before or during DNA packaging.</text>
</comment>
<comment type="function">
    <molecule>Assemblin</molecule>
    <text evidence="3">Protease that plays an essential role in virion assembly within the nucleus. Catalyzes the cleavage of the assembly protein after formation of the spherical procapsid. By that cleavage, the capsid matures and gains its icosahedral shape. The cleavage sites seem to include -Ala-Ser-, -Ala-Ala-, as well as Ala-Thr bonds. Assemblin and cleavages products are evicted from the capsid before or during DNA packaging.</text>
</comment>
<comment type="function">
    <molecule>Assembly protein</molecule>
    <text evidence="3">Plays a major role in capsid assembly. Acts as a scaffold protein by binding major capsid protein. Multimerizes in the nucleus such as major capsid protein forms the icosahedral T=16 capsid. Cleaved by assemblin after capsid completion. The cleavages products are evicted from the capsid before or during DNA packaging.</text>
</comment>
<comment type="catalytic activity">
    <molecule>Assemblin</molecule>
    <reaction evidence="3">
        <text>Cleaves -Ala-|-Ser- and -Ala-|-Ala- bonds in the scaffold protein.</text>
        <dbReference type="EC" id="3.4.21.97"/>
    </reaction>
</comment>
<comment type="subunit">
    <molecule>Capsid scaffolding protein</molecule>
    <text evidence="3">Homomultimer. Interacts with major capsid protein.</text>
</comment>
<comment type="subunit">
    <molecule>Assemblin</molecule>
    <text evidence="3">Exists in a monomer-dimer equilibrium with the dimer being the active species.</text>
</comment>
<comment type="subunit">
    <molecule>Assembly protein</molecule>
    <text evidence="3">Homomultimer. Interacts with major capsid protein.</text>
</comment>
<comment type="subcellular location">
    <molecule>Capsid scaffolding protein</molecule>
    <subcellularLocation>
        <location evidence="3">Host cytoplasm</location>
    </subcellularLocation>
</comment>
<comment type="subcellular location">
    <molecule>Assemblin</molecule>
    <subcellularLocation>
        <location evidence="3">Host nucleus</location>
    </subcellularLocation>
</comment>
<comment type="subcellular location">
    <molecule>Assembly protein</molecule>
    <subcellularLocation>
        <location evidence="3">Host nucleus</location>
    </subcellularLocation>
</comment>
<comment type="domain">
    <text evidence="3">Region of interaction between pPR and pAP is called Amino conserved domain (ACD). The region of interaction with major capsid protein is called carboxyl conserved domain (CCD).</text>
</comment>
<comment type="PTM">
    <molecule>Capsid scaffolding protein</molecule>
    <text evidence="3">Capsid scaffolding protein is cleaved by assemblin after formation of the spherical procapsid. As a result, the capsid obtains its mature, icosahedral shape. Cleavages occur at two or more sites: release (R-site) and maturation (M-site).</text>
</comment>
<comment type="similarity">
    <text evidence="3">Belongs to the herpesviridae capsid scaffolding protein family.</text>
</comment>
<dbReference type="EC" id="3.4.21.97" evidence="3"/>
<dbReference type="EMBL" id="AF005370">
    <property type="protein sequence ID" value="AAC58064.1"/>
    <property type="molecule type" value="Genomic_DNA"/>
</dbReference>
<dbReference type="PIR" id="T03112">
    <property type="entry name" value="T03112"/>
</dbReference>
<dbReference type="RefSeq" id="NP_065516.1">
    <property type="nucleotide sequence ID" value="NC_002531.1"/>
</dbReference>
<dbReference type="SMR" id="O36367"/>
<dbReference type="MEROPS" id="S21.006"/>
<dbReference type="KEGG" id="vg:911752"/>
<dbReference type="Proteomes" id="UP000000941">
    <property type="component" value="Segment"/>
</dbReference>
<dbReference type="GO" id="GO:0030430">
    <property type="term" value="C:host cell cytoplasm"/>
    <property type="evidence" value="ECO:0007669"/>
    <property type="project" value="UniProtKB-SubCell"/>
</dbReference>
<dbReference type="GO" id="GO:0042025">
    <property type="term" value="C:host cell nucleus"/>
    <property type="evidence" value="ECO:0007669"/>
    <property type="project" value="UniProtKB-SubCell"/>
</dbReference>
<dbReference type="GO" id="GO:0042802">
    <property type="term" value="F:identical protein binding"/>
    <property type="evidence" value="ECO:0007669"/>
    <property type="project" value="UniProtKB-UniRule"/>
</dbReference>
<dbReference type="GO" id="GO:0004252">
    <property type="term" value="F:serine-type endopeptidase activity"/>
    <property type="evidence" value="ECO:0007669"/>
    <property type="project" value="UniProtKB-UniRule"/>
</dbReference>
<dbReference type="GO" id="GO:0039708">
    <property type="term" value="P:nuclear capsid assembly"/>
    <property type="evidence" value="ECO:0007669"/>
    <property type="project" value="UniProtKB-ARBA"/>
</dbReference>
<dbReference type="GO" id="GO:0006508">
    <property type="term" value="P:proteolysis"/>
    <property type="evidence" value="ECO:0007669"/>
    <property type="project" value="UniProtKB-KW"/>
</dbReference>
<dbReference type="GO" id="GO:0019076">
    <property type="term" value="P:viral release from host cell"/>
    <property type="evidence" value="ECO:0007669"/>
    <property type="project" value="UniProtKB-UniRule"/>
</dbReference>
<dbReference type="Gene3D" id="3.20.16.10">
    <property type="entry name" value="Herpesvirus/Caudovirus protease domain"/>
    <property type="match status" value="1"/>
</dbReference>
<dbReference type="HAMAP" id="MF_04008">
    <property type="entry name" value="HSV_SCAF"/>
    <property type="match status" value="1"/>
</dbReference>
<dbReference type="InterPro" id="IPR035443">
    <property type="entry name" value="Herpes_virus_sf"/>
</dbReference>
<dbReference type="InterPro" id="IPR001847">
    <property type="entry name" value="Peptidase_S21"/>
</dbReference>
<dbReference type="Pfam" id="PF00716">
    <property type="entry name" value="Peptidase_S21"/>
    <property type="match status" value="1"/>
</dbReference>
<dbReference type="PRINTS" id="PR00236">
    <property type="entry name" value="HSVCAPSIDP40"/>
</dbReference>
<dbReference type="SUPFAM" id="SSF50789">
    <property type="entry name" value="Herpes virus serine proteinase, assemblin"/>
    <property type="match status" value="1"/>
</dbReference>
<keyword id="KW-1035">Host cytoplasm</keyword>
<keyword id="KW-1048">Host nucleus</keyword>
<keyword id="KW-0378">Hydrolase</keyword>
<keyword id="KW-0597">Phosphoprotein</keyword>
<keyword id="KW-0645">Protease</keyword>
<keyword id="KW-1185">Reference proteome</keyword>
<keyword id="KW-0720">Serine protease</keyword>
<keyword id="KW-0118">Viral capsid assembly</keyword>
<keyword id="KW-1188">Viral release from host cell</keyword>